<reference key="1">
    <citation type="journal article" date="1996" name="EMBO J.">
        <title>A sigma factor that modifies the circadian expression of a subset of genes in cyanobacteria.</title>
        <authorList>
            <person name="Tsinoremas N.F."/>
            <person name="Ishiura M."/>
            <person name="Kondo T."/>
            <person name="Andersson C.R."/>
            <person name="Tanaka K."/>
            <person name="Takahashi H."/>
            <person name="Johnson C.H."/>
            <person name="Golden S.S."/>
        </authorList>
    </citation>
    <scope>NUCLEOTIDE SEQUENCE [GENOMIC DNA]</scope>
</reference>
<reference key="2">
    <citation type="submission" date="2005-08" db="EMBL/GenBank/DDBJ databases">
        <title>Complete sequence of chromosome 1 of Synechococcus elongatus PCC 7942.</title>
        <authorList>
            <consortium name="US DOE Joint Genome Institute"/>
            <person name="Copeland A."/>
            <person name="Lucas S."/>
            <person name="Lapidus A."/>
            <person name="Barry K."/>
            <person name="Detter J.C."/>
            <person name="Glavina T."/>
            <person name="Hammon N."/>
            <person name="Israni S."/>
            <person name="Pitluck S."/>
            <person name="Schmutz J."/>
            <person name="Larimer F."/>
            <person name="Land M."/>
            <person name="Kyrpides N."/>
            <person name="Lykidis A."/>
            <person name="Golden S."/>
            <person name="Richardson P."/>
        </authorList>
    </citation>
    <scope>NUCLEOTIDE SEQUENCE [LARGE SCALE GENOMIC DNA]</scope>
    <source>
        <strain>ATCC 33912 / PCC 7942 / FACHB-805</strain>
    </source>
</reference>
<reference key="3">
    <citation type="journal article" date="1992" name="Biosci. Biotechnol. Biochem.">
        <title>Multiple rpoD-related genes of cyanobacteria.</title>
        <authorList>
            <person name="Tanaka K."/>
            <person name="Masuda S."/>
            <person name="Takahashi H."/>
        </authorList>
    </citation>
    <scope>NUCLEOTIDE SEQUENCE [GENOMIC DNA] OF 112-159</scope>
    <scope>FUNCTION IN THE BIOLOGICAL CLOCK PATHWAY</scope>
</reference>
<accession>Q31ME3</accession>
<accession>Q55350</accession>
<proteinExistence type="evidence at protein level"/>
<keyword id="KW-0963">Cytoplasm</keyword>
<keyword id="KW-0238">DNA-binding</keyword>
<keyword id="KW-1185">Reference proteome</keyword>
<keyword id="KW-0731">Sigma factor</keyword>
<keyword id="KW-0804">Transcription</keyword>
<keyword id="KW-0805">Transcription regulation</keyword>
<gene>
    <name type="primary">sigA2</name>
    <name type="synonym">rpoD2</name>
    <name type="ordered locus">Synpcc7942_1746</name>
</gene>
<protein>
    <recommendedName>
        <fullName>RNA polymerase sigma factor SigA2</fullName>
    </recommendedName>
</protein>
<evidence type="ECO:0000250" key="1"/>
<evidence type="ECO:0000269" key="2">
    <source>
    </source>
</evidence>
<evidence type="ECO:0000305" key="3"/>
<dbReference type="EMBL" id="AB006910">
    <property type="protein sequence ID" value="BAA22190.1"/>
    <property type="molecule type" value="Genomic_DNA"/>
</dbReference>
<dbReference type="EMBL" id="CP000100">
    <property type="protein sequence ID" value="ABB57776.1"/>
    <property type="molecule type" value="Genomic_DNA"/>
</dbReference>
<dbReference type="PIR" id="S69547">
    <property type="entry name" value="S69547"/>
</dbReference>
<dbReference type="RefSeq" id="WP_011378168.1">
    <property type="nucleotide sequence ID" value="NZ_JACJTX010000001.1"/>
</dbReference>
<dbReference type="SMR" id="Q31ME3"/>
<dbReference type="STRING" id="1140.Synpcc7942_1746"/>
<dbReference type="PaxDb" id="1140-Synpcc7942_1746"/>
<dbReference type="GeneID" id="72430617"/>
<dbReference type="KEGG" id="syf:Synpcc7942_1746"/>
<dbReference type="eggNOG" id="COG0568">
    <property type="taxonomic scope" value="Bacteria"/>
</dbReference>
<dbReference type="HOGENOM" id="CLU_014793_3_4_3"/>
<dbReference type="OrthoDB" id="551215at2"/>
<dbReference type="BioCyc" id="SYNEL:SYNPCC7942_1746-MONOMER"/>
<dbReference type="Proteomes" id="UP000889800">
    <property type="component" value="Chromosome"/>
</dbReference>
<dbReference type="GO" id="GO:0005737">
    <property type="term" value="C:cytoplasm"/>
    <property type="evidence" value="ECO:0007669"/>
    <property type="project" value="UniProtKB-SubCell"/>
</dbReference>
<dbReference type="GO" id="GO:0003677">
    <property type="term" value="F:DNA binding"/>
    <property type="evidence" value="ECO:0007669"/>
    <property type="project" value="UniProtKB-KW"/>
</dbReference>
<dbReference type="GO" id="GO:0016987">
    <property type="term" value="F:sigma factor activity"/>
    <property type="evidence" value="ECO:0007669"/>
    <property type="project" value="UniProtKB-KW"/>
</dbReference>
<dbReference type="GO" id="GO:0006352">
    <property type="term" value="P:DNA-templated transcription initiation"/>
    <property type="evidence" value="ECO:0007669"/>
    <property type="project" value="InterPro"/>
</dbReference>
<dbReference type="CDD" id="cd06171">
    <property type="entry name" value="Sigma70_r4"/>
    <property type="match status" value="1"/>
</dbReference>
<dbReference type="FunFam" id="1.10.601.10:FF:000001">
    <property type="entry name" value="RNA polymerase sigma factor SigA"/>
    <property type="match status" value="1"/>
</dbReference>
<dbReference type="Gene3D" id="1.10.601.10">
    <property type="entry name" value="RNA Polymerase Primary Sigma Factor"/>
    <property type="match status" value="1"/>
</dbReference>
<dbReference type="Gene3D" id="1.10.10.10">
    <property type="entry name" value="Winged helix-like DNA-binding domain superfamily/Winged helix DNA-binding domain"/>
    <property type="match status" value="2"/>
</dbReference>
<dbReference type="InterPro" id="IPR014284">
    <property type="entry name" value="RNA_pol_sigma-70_dom"/>
</dbReference>
<dbReference type="InterPro" id="IPR000943">
    <property type="entry name" value="RNA_pol_sigma70"/>
</dbReference>
<dbReference type="InterPro" id="IPR009042">
    <property type="entry name" value="RNA_pol_sigma70_r1_2"/>
</dbReference>
<dbReference type="InterPro" id="IPR007627">
    <property type="entry name" value="RNA_pol_sigma70_r2"/>
</dbReference>
<dbReference type="InterPro" id="IPR007624">
    <property type="entry name" value="RNA_pol_sigma70_r3"/>
</dbReference>
<dbReference type="InterPro" id="IPR007630">
    <property type="entry name" value="RNA_pol_sigma70_r4"/>
</dbReference>
<dbReference type="InterPro" id="IPR013325">
    <property type="entry name" value="RNA_pol_sigma_r2"/>
</dbReference>
<dbReference type="InterPro" id="IPR013324">
    <property type="entry name" value="RNA_pol_sigma_r3/r4-like"/>
</dbReference>
<dbReference type="InterPro" id="IPR017848">
    <property type="entry name" value="RNA_pol_sigma_RpoD/SigA_cyanob"/>
</dbReference>
<dbReference type="InterPro" id="IPR050239">
    <property type="entry name" value="Sigma-70_RNA_pol_init_factors"/>
</dbReference>
<dbReference type="InterPro" id="IPR036388">
    <property type="entry name" value="WH-like_DNA-bd_sf"/>
</dbReference>
<dbReference type="NCBIfam" id="NF004615">
    <property type="entry name" value="PRK05949.1"/>
    <property type="match status" value="1"/>
</dbReference>
<dbReference type="NCBIfam" id="TIGR02997">
    <property type="entry name" value="Sig70-cyanoRpoD"/>
    <property type="match status" value="1"/>
</dbReference>
<dbReference type="NCBIfam" id="TIGR02937">
    <property type="entry name" value="sigma70-ECF"/>
    <property type="match status" value="1"/>
</dbReference>
<dbReference type="PANTHER" id="PTHR30603">
    <property type="entry name" value="RNA POLYMERASE SIGMA FACTOR RPO"/>
    <property type="match status" value="1"/>
</dbReference>
<dbReference type="PANTHER" id="PTHR30603:SF60">
    <property type="entry name" value="RNA POLYMERASE SIGMA FACTOR RPOD"/>
    <property type="match status" value="1"/>
</dbReference>
<dbReference type="Pfam" id="PF00140">
    <property type="entry name" value="Sigma70_r1_2"/>
    <property type="match status" value="1"/>
</dbReference>
<dbReference type="Pfam" id="PF04542">
    <property type="entry name" value="Sigma70_r2"/>
    <property type="match status" value="1"/>
</dbReference>
<dbReference type="Pfam" id="PF04539">
    <property type="entry name" value="Sigma70_r3"/>
    <property type="match status" value="1"/>
</dbReference>
<dbReference type="Pfam" id="PF04545">
    <property type="entry name" value="Sigma70_r4"/>
    <property type="match status" value="1"/>
</dbReference>
<dbReference type="PRINTS" id="PR00046">
    <property type="entry name" value="SIGMA70FCT"/>
</dbReference>
<dbReference type="SUPFAM" id="SSF88946">
    <property type="entry name" value="Sigma2 domain of RNA polymerase sigma factors"/>
    <property type="match status" value="1"/>
</dbReference>
<dbReference type="SUPFAM" id="SSF88659">
    <property type="entry name" value="Sigma3 and sigma4 domains of RNA polymerase sigma factors"/>
    <property type="match status" value="2"/>
</dbReference>
<dbReference type="PROSITE" id="PS00715">
    <property type="entry name" value="SIGMA70_1"/>
    <property type="match status" value="1"/>
</dbReference>
<name>SIGA2_SYNE7</name>
<sequence length="320" mass="37124">MSTSSAQYSPDLVRAYLQEIGRVRLLTAEEELCFGRQVQRLMMLLDAQTELRDRLGHEPSKEEWAAAVDLNLEDLDRQIEQGQRAKRKMIEANLRLVVSIAKKYQKRHMEFLDLIQEGTLGLERGVEKFDPSKGYKFSTYAYWWIRQAITRAIAQQSRTIRLPIHITEKLNKLKKTQRELSQQLGRSATASELAEVLELPLEQVREYIQMNRQPVSLDVKVGDSQDTELQELLEDEQSSPSDYVEQESLRRDLRNLMAELTPQQQAVIALRYGLDEGDSLSLAKVGERLNISRERVRKLERQAMDHLRRRSRLLAEYAAS</sequence>
<comment type="function">
    <text evidence="2">Sigma factors are initiation factors that promote the attachment of RNA polymerase to specific initiation sites and are then released. This sigma factor is a component of the biological clock pathway that affects the circadian expression of a subset of genes in this bacterium.</text>
</comment>
<comment type="subcellular location">
    <subcellularLocation>
        <location evidence="3">Cytoplasm</location>
    </subcellularLocation>
</comment>
<comment type="similarity">
    <text evidence="3">Belongs to the sigma-70 factor family.</text>
</comment>
<feature type="chain" id="PRO_0000345946" description="RNA polymerase sigma factor SigA2">
    <location>
        <begin position="1"/>
        <end position="320"/>
    </location>
</feature>
<feature type="DNA-binding region" description="H-T-H motif" evidence="1">
    <location>
        <begin position="282"/>
        <end position="301"/>
    </location>
</feature>
<feature type="region of interest" description="Sigma-70 factor domain-2" evidence="1">
    <location>
        <begin position="89"/>
        <end position="159"/>
    </location>
</feature>
<feature type="region of interest" description="Sigma-70 factor domain-3" evidence="1">
    <location>
        <begin position="168"/>
        <end position="243"/>
    </location>
</feature>
<feature type="region of interest" description="Sigma-70 factor domain-4" evidence="1">
    <location>
        <begin position="256"/>
        <end position="310"/>
    </location>
</feature>
<feature type="short sequence motif" description="Interaction with polymerase core subunit RpoC">
    <location>
        <begin position="113"/>
        <end position="116"/>
    </location>
</feature>
<feature type="sequence conflict" description="In Ref. 1; BAA22190." evidence="3" ref="1">
    <original>Q</original>
    <variation>E</variation>
    <location>
        <position position="78"/>
    </location>
</feature>
<organism>
    <name type="scientific">Synechococcus elongatus (strain ATCC 33912 / PCC 7942 / FACHB-805)</name>
    <name type="common">Anacystis nidulans R2</name>
    <dbReference type="NCBI Taxonomy" id="1140"/>
    <lineage>
        <taxon>Bacteria</taxon>
        <taxon>Bacillati</taxon>
        <taxon>Cyanobacteriota</taxon>
        <taxon>Cyanophyceae</taxon>
        <taxon>Synechococcales</taxon>
        <taxon>Synechococcaceae</taxon>
        <taxon>Synechococcus</taxon>
    </lineage>
</organism>